<comment type="function">
    <text evidence="1">Transfers and isomerizes the ribose moiety from AdoMet to the 7-aminomethyl group of 7-deazaguanine (preQ1-tRNA) to give epoxyqueuosine (oQ-tRNA).</text>
</comment>
<comment type="catalytic activity">
    <reaction evidence="1">
        <text>7-aminomethyl-7-carbaguanosine(34) in tRNA + S-adenosyl-L-methionine = epoxyqueuosine(34) in tRNA + adenine + L-methionine + 2 H(+)</text>
        <dbReference type="Rhea" id="RHEA:32155"/>
        <dbReference type="Rhea" id="RHEA-COMP:10342"/>
        <dbReference type="Rhea" id="RHEA-COMP:18582"/>
        <dbReference type="ChEBI" id="CHEBI:15378"/>
        <dbReference type="ChEBI" id="CHEBI:16708"/>
        <dbReference type="ChEBI" id="CHEBI:57844"/>
        <dbReference type="ChEBI" id="CHEBI:59789"/>
        <dbReference type="ChEBI" id="CHEBI:82833"/>
        <dbReference type="ChEBI" id="CHEBI:194443"/>
        <dbReference type="EC" id="2.4.99.17"/>
    </reaction>
</comment>
<comment type="pathway">
    <text evidence="1">tRNA modification; tRNA-queuosine biosynthesis.</text>
</comment>
<comment type="subunit">
    <text evidence="1">Monomer.</text>
</comment>
<comment type="subcellular location">
    <subcellularLocation>
        <location evidence="1">Cytoplasm</location>
    </subcellularLocation>
</comment>
<comment type="similarity">
    <text evidence="1">Belongs to the QueA family.</text>
</comment>
<gene>
    <name evidence="1" type="primary">queA</name>
    <name type="ordered locus">Smal_1614</name>
</gene>
<protein>
    <recommendedName>
        <fullName evidence="1">S-adenosylmethionine:tRNA ribosyltransferase-isomerase</fullName>
        <ecNumber evidence="1">2.4.99.17</ecNumber>
    </recommendedName>
    <alternativeName>
        <fullName evidence="1">Queuosine biosynthesis protein QueA</fullName>
    </alternativeName>
</protein>
<accession>B4SSS0</accession>
<reference key="1">
    <citation type="submission" date="2008-06" db="EMBL/GenBank/DDBJ databases">
        <title>Complete sequence of Stenotrophomonas maltophilia R551-3.</title>
        <authorList>
            <consortium name="US DOE Joint Genome Institute"/>
            <person name="Lucas S."/>
            <person name="Copeland A."/>
            <person name="Lapidus A."/>
            <person name="Glavina del Rio T."/>
            <person name="Dalin E."/>
            <person name="Tice H."/>
            <person name="Pitluck S."/>
            <person name="Chain P."/>
            <person name="Malfatti S."/>
            <person name="Shin M."/>
            <person name="Vergez L."/>
            <person name="Lang D."/>
            <person name="Schmutz J."/>
            <person name="Larimer F."/>
            <person name="Land M."/>
            <person name="Hauser L."/>
            <person name="Kyrpides N."/>
            <person name="Mikhailova N."/>
            <person name="Taghavi S."/>
            <person name="Monchy S."/>
            <person name="Newman L."/>
            <person name="Vangronsveld J."/>
            <person name="van der Lelie D."/>
            <person name="Richardson P."/>
        </authorList>
    </citation>
    <scope>NUCLEOTIDE SEQUENCE [LARGE SCALE GENOMIC DNA]</scope>
    <source>
        <strain>R551-3</strain>
    </source>
</reference>
<evidence type="ECO:0000255" key="1">
    <source>
        <dbReference type="HAMAP-Rule" id="MF_00113"/>
    </source>
</evidence>
<sequence>MKKSDFNYNLPAELIAQAPLAERSASRLLLVPPAPDAFTDLQVRDLPSLLQPGDLLVFNDTRVIPARLFGQKASGGRVEILIERLLGGQQARAQVGASKSPKAGSRIALDAGGEAEVLGRDGEFYVLQFHVPESLEQWLLHAGRLPLPPYIQREPGMDDRERYQTVFAREVGAVAAPTAGLHFDEPLLAALKDKGVDFGHVTLHVGAGTFQPVRADDLKDHVMHREWLNVGAELVQQVRRTRAAGGRVIGVGTTVVRALESAMRDGELLPFAGETQIFITPGYRIRSVDAMVTNFHLPESTLLMMISAFAGKERVFEAYQHAIAQRYRFFSYGDAMLLFPQAG</sequence>
<proteinExistence type="inferred from homology"/>
<feature type="chain" id="PRO_1000094819" description="S-adenosylmethionine:tRNA ribosyltransferase-isomerase">
    <location>
        <begin position="1"/>
        <end position="343"/>
    </location>
</feature>
<dbReference type="EC" id="2.4.99.17" evidence="1"/>
<dbReference type="EMBL" id="CP001111">
    <property type="protein sequence ID" value="ACF51319.1"/>
    <property type="molecule type" value="Genomic_DNA"/>
</dbReference>
<dbReference type="SMR" id="B4SSS0"/>
<dbReference type="STRING" id="391008.Smal_1614"/>
<dbReference type="KEGG" id="smt:Smal_1614"/>
<dbReference type="eggNOG" id="COG0809">
    <property type="taxonomic scope" value="Bacteria"/>
</dbReference>
<dbReference type="HOGENOM" id="CLU_039110_1_0_6"/>
<dbReference type="UniPathway" id="UPA00392"/>
<dbReference type="Proteomes" id="UP000001867">
    <property type="component" value="Chromosome"/>
</dbReference>
<dbReference type="GO" id="GO:0005737">
    <property type="term" value="C:cytoplasm"/>
    <property type="evidence" value="ECO:0007669"/>
    <property type="project" value="UniProtKB-SubCell"/>
</dbReference>
<dbReference type="GO" id="GO:0051075">
    <property type="term" value="F:S-adenosylmethionine:tRNA ribosyltransferase-isomerase activity"/>
    <property type="evidence" value="ECO:0007669"/>
    <property type="project" value="UniProtKB-EC"/>
</dbReference>
<dbReference type="GO" id="GO:0008616">
    <property type="term" value="P:queuosine biosynthetic process"/>
    <property type="evidence" value="ECO:0007669"/>
    <property type="project" value="UniProtKB-UniRule"/>
</dbReference>
<dbReference type="GO" id="GO:0002099">
    <property type="term" value="P:tRNA wobble guanine modification"/>
    <property type="evidence" value="ECO:0007669"/>
    <property type="project" value="TreeGrafter"/>
</dbReference>
<dbReference type="FunFam" id="3.40.1780.10:FF:000001">
    <property type="entry name" value="S-adenosylmethionine:tRNA ribosyltransferase-isomerase"/>
    <property type="match status" value="1"/>
</dbReference>
<dbReference type="Gene3D" id="2.40.10.240">
    <property type="entry name" value="QueA-like"/>
    <property type="match status" value="1"/>
</dbReference>
<dbReference type="Gene3D" id="3.40.1780.10">
    <property type="entry name" value="QueA-like"/>
    <property type="match status" value="1"/>
</dbReference>
<dbReference type="HAMAP" id="MF_00113">
    <property type="entry name" value="QueA"/>
    <property type="match status" value="1"/>
</dbReference>
<dbReference type="InterPro" id="IPR003699">
    <property type="entry name" value="QueA"/>
</dbReference>
<dbReference type="InterPro" id="IPR042118">
    <property type="entry name" value="QueA_dom1"/>
</dbReference>
<dbReference type="InterPro" id="IPR042119">
    <property type="entry name" value="QueA_dom2"/>
</dbReference>
<dbReference type="InterPro" id="IPR036100">
    <property type="entry name" value="QueA_sf"/>
</dbReference>
<dbReference type="NCBIfam" id="NF001140">
    <property type="entry name" value="PRK00147.1"/>
    <property type="match status" value="1"/>
</dbReference>
<dbReference type="NCBIfam" id="TIGR00113">
    <property type="entry name" value="queA"/>
    <property type="match status" value="1"/>
</dbReference>
<dbReference type="PANTHER" id="PTHR30307">
    <property type="entry name" value="S-ADENOSYLMETHIONINE:TRNA RIBOSYLTRANSFERASE-ISOMERASE"/>
    <property type="match status" value="1"/>
</dbReference>
<dbReference type="PANTHER" id="PTHR30307:SF0">
    <property type="entry name" value="S-ADENOSYLMETHIONINE:TRNA RIBOSYLTRANSFERASE-ISOMERASE"/>
    <property type="match status" value="1"/>
</dbReference>
<dbReference type="Pfam" id="PF02547">
    <property type="entry name" value="Queuosine_synth"/>
    <property type="match status" value="1"/>
</dbReference>
<dbReference type="SUPFAM" id="SSF111337">
    <property type="entry name" value="QueA-like"/>
    <property type="match status" value="1"/>
</dbReference>
<keyword id="KW-0963">Cytoplasm</keyword>
<keyword id="KW-0671">Queuosine biosynthesis</keyword>
<keyword id="KW-0949">S-adenosyl-L-methionine</keyword>
<keyword id="KW-0808">Transferase</keyword>
<organism>
    <name type="scientific">Stenotrophomonas maltophilia (strain R551-3)</name>
    <dbReference type="NCBI Taxonomy" id="391008"/>
    <lineage>
        <taxon>Bacteria</taxon>
        <taxon>Pseudomonadati</taxon>
        <taxon>Pseudomonadota</taxon>
        <taxon>Gammaproteobacteria</taxon>
        <taxon>Lysobacterales</taxon>
        <taxon>Lysobacteraceae</taxon>
        <taxon>Stenotrophomonas</taxon>
        <taxon>Stenotrophomonas maltophilia group</taxon>
    </lineage>
</organism>
<name>QUEA_STRM5</name>